<proteinExistence type="evidence at transcript level"/>
<keyword id="KW-0165">Cleavage on pair of basic residues</keyword>
<keyword id="KW-1015">Disulfide bond</keyword>
<keyword id="KW-0964">Secreted</keyword>
<keyword id="KW-0732">Signal</keyword>
<keyword id="KW-0800">Toxin</keyword>
<accession>P0C641</accession>
<accession>A8RCS0</accession>
<sequence>MRCVPVFVILLLLIASAASIDAQQKTKDDAPLTSLNDNALQQHWNKRCCPRKIWCCMIPR</sequence>
<evidence type="ECO:0000250" key="1"/>
<evidence type="ECO:0000255" key="2"/>
<evidence type="ECO:0000303" key="3">
    <source>
    </source>
</evidence>
<evidence type="ECO:0000305" key="4"/>
<reference key="1">
    <citation type="journal article" date="2007" name="Peptides">
        <title>Identification of six novel T-1 conotoxins from Conus pulicarius by molecular cloning.</title>
        <authorList>
            <person name="Peng C."/>
            <person name="Wu X."/>
            <person name="Han Y."/>
            <person name="Yuan D."/>
            <person name="Chi C."/>
            <person name="Wang C."/>
        </authorList>
    </citation>
    <scope>NUCLEOTIDE SEQUENCE [MRNA]</scope>
    <source>
        <tissue>Venom duct</tissue>
    </source>
</reference>
<comment type="subcellular location">
    <subcellularLocation>
        <location evidence="1">Secreted</location>
    </subcellularLocation>
</comment>
<comment type="tissue specificity">
    <text>Expressed by the venom duct.</text>
</comment>
<comment type="domain">
    <text>The cysteine framework is V (CC-CC).</text>
</comment>
<comment type="PTM">
    <text evidence="4">Contains 2 disulfide bonds that can be either 'C1-C3, C2-C4' or 'C1-C4, C2-C3', since these disulfide connectivities have been observed for conotoxins with cysteine framework V (for examples, see AC P0DQQ7 and AC P81755).</text>
</comment>
<comment type="similarity">
    <text evidence="4">Belongs to the conotoxin T superfamily.</text>
</comment>
<feature type="signal peptide" evidence="2">
    <location>
        <begin position="1"/>
        <end position="19"/>
    </location>
</feature>
<feature type="propeptide" id="PRO_0000315453" evidence="1">
    <location>
        <begin position="20"/>
        <end position="47"/>
    </location>
</feature>
<feature type="peptide" id="PRO_0000315454" description="Conotoxin Pu5.6">
    <location>
        <begin position="48"/>
        <end position="59"/>
    </location>
</feature>
<protein>
    <recommendedName>
        <fullName evidence="3">Conotoxin Pu5.6</fullName>
    </recommendedName>
</protein>
<name>CT56_CONPL</name>
<organism>
    <name type="scientific">Conus pulicarius</name>
    <name type="common">Flea-bitten cone</name>
    <dbReference type="NCBI Taxonomy" id="93154"/>
    <lineage>
        <taxon>Eukaryota</taxon>
        <taxon>Metazoa</taxon>
        <taxon>Spiralia</taxon>
        <taxon>Lophotrochozoa</taxon>
        <taxon>Mollusca</taxon>
        <taxon>Gastropoda</taxon>
        <taxon>Caenogastropoda</taxon>
        <taxon>Neogastropoda</taxon>
        <taxon>Conoidea</taxon>
        <taxon>Conidae</taxon>
        <taxon>Conus</taxon>
    </lineage>
</organism>
<dbReference type="EMBL" id="EF488468">
    <property type="protein sequence ID" value="ABS01340.1"/>
    <property type="molecule type" value="mRNA"/>
</dbReference>
<dbReference type="ConoServer" id="2799">
    <property type="toxin name" value="Pu5.6 precursor"/>
</dbReference>
<dbReference type="GO" id="GO:0005576">
    <property type="term" value="C:extracellular region"/>
    <property type="evidence" value="ECO:0007669"/>
    <property type="project" value="UniProtKB-SubCell"/>
</dbReference>
<dbReference type="GO" id="GO:0090729">
    <property type="term" value="F:toxin activity"/>
    <property type="evidence" value="ECO:0007669"/>
    <property type="project" value="UniProtKB-KW"/>
</dbReference>
<dbReference type="InterPro" id="IPR031565">
    <property type="entry name" value="T-conotoxin"/>
</dbReference>
<dbReference type="Pfam" id="PF16981">
    <property type="entry name" value="Chi-conotoxin"/>
    <property type="match status" value="1"/>
</dbReference>